<accession>B0U219</accession>
<protein>
    <recommendedName>
        <fullName evidence="1">Aspartate/glutamate leucyltransferase</fullName>
        <ecNumber evidence="1">2.3.2.29</ecNumber>
    </recommendedName>
</protein>
<comment type="function">
    <text evidence="1">Functions in the N-end rule pathway of protein degradation where it conjugates Leu from its aminoacyl-tRNA to the N-termini of proteins containing an N-terminal aspartate or glutamate.</text>
</comment>
<comment type="catalytic activity">
    <reaction evidence="1">
        <text>N-terminal L-glutamyl-[protein] + L-leucyl-tRNA(Leu) = N-terminal L-leucyl-L-glutamyl-[protein] + tRNA(Leu) + H(+)</text>
        <dbReference type="Rhea" id="RHEA:50412"/>
        <dbReference type="Rhea" id="RHEA-COMP:9613"/>
        <dbReference type="Rhea" id="RHEA-COMP:9622"/>
        <dbReference type="Rhea" id="RHEA-COMP:12664"/>
        <dbReference type="Rhea" id="RHEA-COMP:12668"/>
        <dbReference type="ChEBI" id="CHEBI:15378"/>
        <dbReference type="ChEBI" id="CHEBI:64721"/>
        <dbReference type="ChEBI" id="CHEBI:78442"/>
        <dbReference type="ChEBI" id="CHEBI:78494"/>
        <dbReference type="ChEBI" id="CHEBI:133041"/>
        <dbReference type="EC" id="2.3.2.29"/>
    </reaction>
</comment>
<comment type="catalytic activity">
    <reaction evidence="1">
        <text>N-terminal L-aspartyl-[protein] + L-leucyl-tRNA(Leu) = N-terminal L-leucyl-L-aspartyl-[protein] + tRNA(Leu) + H(+)</text>
        <dbReference type="Rhea" id="RHEA:50420"/>
        <dbReference type="Rhea" id="RHEA-COMP:9613"/>
        <dbReference type="Rhea" id="RHEA-COMP:9622"/>
        <dbReference type="Rhea" id="RHEA-COMP:12669"/>
        <dbReference type="Rhea" id="RHEA-COMP:12674"/>
        <dbReference type="ChEBI" id="CHEBI:15378"/>
        <dbReference type="ChEBI" id="CHEBI:64720"/>
        <dbReference type="ChEBI" id="CHEBI:78442"/>
        <dbReference type="ChEBI" id="CHEBI:78494"/>
        <dbReference type="ChEBI" id="CHEBI:133042"/>
        <dbReference type="EC" id="2.3.2.29"/>
    </reaction>
</comment>
<comment type="subcellular location">
    <subcellularLocation>
        <location evidence="1">Cytoplasm</location>
    </subcellularLocation>
</comment>
<comment type="similarity">
    <text evidence="1">Belongs to the R-transferase family. Bpt subfamily.</text>
</comment>
<evidence type="ECO:0000255" key="1">
    <source>
        <dbReference type="HAMAP-Rule" id="MF_00689"/>
    </source>
</evidence>
<reference key="1">
    <citation type="journal article" date="2010" name="J. Bacteriol.">
        <title>Whole genome sequences of two Xylella fastidiosa strains (M12 and M23) causing almond leaf scorch disease in California.</title>
        <authorList>
            <person name="Chen J."/>
            <person name="Xie G."/>
            <person name="Han S."/>
            <person name="Chertkov O."/>
            <person name="Sims D."/>
            <person name="Civerolo E.L."/>
        </authorList>
    </citation>
    <scope>NUCLEOTIDE SEQUENCE [LARGE SCALE GENOMIC DNA]</scope>
    <source>
        <strain>M12</strain>
    </source>
</reference>
<proteinExistence type="inferred from homology"/>
<organism>
    <name type="scientific">Xylella fastidiosa (strain M12)</name>
    <dbReference type="NCBI Taxonomy" id="405440"/>
    <lineage>
        <taxon>Bacteria</taxon>
        <taxon>Pseudomonadati</taxon>
        <taxon>Pseudomonadota</taxon>
        <taxon>Gammaproteobacteria</taxon>
        <taxon>Lysobacterales</taxon>
        <taxon>Lysobacteraceae</taxon>
        <taxon>Xylella</taxon>
    </lineage>
</organism>
<dbReference type="EC" id="2.3.2.29" evidence="1"/>
<dbReference type="EMBL" id="CP000941">
    <property type="protein sequence ID" value="ACA11353.1"/>
    <property type="molecule type" value="Genomic_DNA"/>
</dbReference>
<dbReference type="RefSeq" id="WP_004085229.1">
    <property type="nucleotide sequence ID" value="NC_010513.1"/>
</dbReference>
<dbReference type="SMR" id="B0U219"/>
<dbReference type="KEGG" id="xfm:Xfasm12_0334"/>
<dbReference type="HOGENOM" id="CLU_077607_0_0_6"/>
<dbReference type="GO" id="GO:0005737">
    <property type="term" value="C:cytoplasm"/>
    <property type="evidence" value="ECO:0007669"/>
    <property type="project" value="UniProtKB-SubCell"/>
</dbReference>
<dbReference type="GO" id="GO:0004057">
    <property type="term" value="F:arginyl-tRNA--protein transferase activity"/>
    <property type="evidence" value="ECO:0007669"/>
    <property type="project" value="InterPro"/>
</dbReference>
<dbReference type="GO" id="GO:0008914">
    <property type="term" value="F:leucyl-tRNA--protein transferase activity"/>
    <property type="evidence" value="ECO:0007669"/>
    <property type="project" value="UniProtKB-UniRule"/>
</dbReference>
<dbReference type="GO" id="GO:0071596">
    <property type="term" value="P:ubiquitin-dependent protein catabolic process via the N-end rule pathway"/>
    <property type="evidence" value="ECO:0007669"/>
    <property type="project" value="InterPro"/>
</dbReference>
<dbReference type="HAMAP" id="MF_00689">
    <property type="entry name" value="Bpt"/>
    <property type="match status" value="1"/>
</dbReference>
<dbReference type="InterPro" id="IPR016181">
    <property type="entry name" value="Acyl_CoA_acyltransferase"/>
</dbReference>
<dbReference type="InterPro" id="IPR017138">
    <property type="entry name" value="Asp_Glu_LeuTrfase"/>
</dbReference>
<dbReference type="InterPro" id="IPR030700">
    <property type="entry name" value="N-end_Aminoacyl_Trfase"/>
</dbReference>
<dbReference type="InterPro" id="IPR007472">
    <property type="entry name" value="N-end_Aminoacyl_Trfase_C"/>
</dbReference>
<dbReference type="InterPro" id="IPR007471">
    <property type="entry name" value="N-end_Aminoacyl_Trfase_N"/>
</dbReference>
<dbReference type="NCBIfam" id="NF002341">
    <property type="entry name" value="PRK01305.1-1"/>
    <property type="match status" value="1"/>
</dbReference>
<dbReference type="NCBIfam" id="NF002342">
    <property type="entry name" value="PRK01305.1-3"/>
    <property type="match status" value="1"/>
</dbReference>
<dbReference type="NCBIfam" id="NF002346">
    <property type="entry name" value="PRK01305.2-3"/>
    <property type="match status" value="1"/>
</dbReference>
<dbReference type="PANTHER" id="PTHR21367">
    <property type="entry name" value="ARGININE-TRNA-PROTEIN TRANSFERASE 1"/>
    <property type="match status" value="1"/>
</dbReference>
<dbReference type="PANTHER" id="PTHR21367:SF1">
    <property type="entry name" value="ARGINYL-TRNA--PROTEIN TRANSFERASE 1"/>
    <property type="match status" value="1"/>
</dbReference>
<dbReference type="Pfam" id="PF04377">
    <property type="entry name" value="ATE_C"/>
    <property type="match status" value="1"/>
</dbReference>
<dbReference type="Pfam" id="PF04376">
    <property type="entry name" value="ATE_N"/>
    <property type="match status" value="1"/>
</dbReference>
<dbReference type="PIRSF" id="PIRSF037208">
    <property type="entry name" value="ATE_pro_prd"/>
    <property type="match status" value="1"/>
</dbReference>
<dbReference type="SUPFAM" id="SSF55729">
    <property type="entry name" value="Acyl-CoA N-acyltransferases (Nat)"/>
    <property type="match status" value="1"/>
</dbReference>
<keyword id="KW-0012">Acyltransferase</keyword>
<keyword id="KW-0963">Cytoplasm</keyword>
<keyword id="KW-0808">Transferase</keyword>
<gene>
    <name evidence="1" type="primary">bpt</name>
    <name type="ordered locus">Xfasm12_0334</name>
</gene>
<feature type="chain" id="PRO_1000132004" description="Aspartate/glutamate leucyltransferase">
    <location>
        <begin position="1"/>
        <end position="254"/>
    </location>
</feature>
<name>BPT_XYLFM</name>
<sequence length="254" mass="29489">MAIDSKPHDDLQLFKTNLHPCGYWPDRWASDLVMDPNDPRLGAIYPQTLAWGFRRSGNLLYRPHCEHCNACVPVRVNVNAFVPNRSQRRCLARNATLVTRIVPAERNAEQLSLYRRYLHQRHPDGGMDGHGAIEFDQFLIGPWGYGRFMEIREPATNGTPGQLLAVAVTDLIHQALSAVYTFYEPNAAARGLGTLAILHQIHWAQREQRPYLYLGYWIKDHFKMDYKRRFQKLEIYDGYCWRPFSTTYPTTHTL</sequence>